<feature type="chain" id="PRO_0000090735" description="Phosphatidate cytidylyltransferase">
    <location>
        <begin position="1"/>
        <end position="285"/>
    </location>
</feature>
<feature type="transmembrane region" description="Helical" evidence="2">
    <location>
        <begin position="10"/>
        <end position="30"/>
    </location>
</feature>
<feature type="transmembrane region" description="Helical" evidence="2">
    <location>
        <begin position="56"/>
        <end position="76"/>
    </location>
</feature>
<feature type="transmembrane region" description="Helical" evidence="2">
    <location>
        <begin position="93"/>
        <end position="113"/>
    </location>
</feature>
<feature type="transmembrane region" description="Helical" evidence="2">
    <location>
        <begin position="121"/>
        <end position="141"/>
    </location>
</feature>
<feature type="transmembrane region" description="Helical" evidence="2">
    <location>
        <begin position="151"/>
        <end position="171"/>
    </location>
</feature>
<feature type="transmembrane region" description="Helical" evidence="2">
    <location>
        <begin position="190"/>
        <end position="210"/>
    </location>
</feature>
<feature type="transmembrane region" description="Helical" evidence="2">
    <location>
        <begin position="213"/>
        <end position="233"/>
    </location>
</feature>
<feature type="transmembrane region" description="Helical" evidence="2">
    <location>
        <begin position="264"/>
        <end position="284"/>
    </location>
</feature>
<organism>
    <name type="scientific">Escherichia coli O157:H7</name>
    <dbReference type="NCBI Taxonomy" id="83334"/>
    <lineage>
        <taxon>Bacteria</taxon>
        <taxon>Pseudomonadati</taxon>
        <taxon>Pseudomonadota</taxon>
        <taxon>Gammaproteobacteria</taxon>
        <taxon>Enterobacterales</taxon>
        <taxon>Enterobacteriaceae</taxon>
        <taxon>Escherichia</taxon>
    </lineage>
</organism>
<accession>P0ABG2</accession>
<accession>P06466</accession>
<dbReference type="EC" id="2.7.7.41"/>
<dbReference type="EMBL" id="AE005174">
    <property type="protein sequence ID" value="AAG54477.1"/>
    <property type="status" value="ALT_INIT"/>
    <property type="molecule type" value="Genomic_DNA"/>
</dbReference>
<dbReference type="EMBL" id="BA000007">
    <property type="protein sequence ID" value="BAB33600.1"/>
    <property type="status" value="ALT_INIT"/>
    <property type="molecule type" value="Genomic_DNA"/>
</dbReference>
<dbReference type="PIR" id="A85502">
    <property type="entry name" value="A85502"/>
</dbReference>
<dbReference type="PIR" id="A99651">
    <property type="entry name" value="A99651"/>
</dbReference>
<dbReference type="RefSeq" id="NP_308204.2">
    <property type="nucleotide sequence ID" value="NC_002695.1"/>
</dbReference>
<dbReference type="RefSeq" id="WP_000922446.1">
    <property type="nucleotide sequence ID" value="NZ_VOAI01000002.1"/>
</dbReference>
<dbReference type="SMR" id="P0ABG2"/>
<dbReference type="STRING" id="155864.Z0186"/>
<dbReference type="GeneID" id="913883"/>
<dbReference type="GeneID" id="93777250"/>
<dbReference type="KEGG" id="ece:Z0186"/>
<dbReference type="KEGG" id="ecs:ECs_0177"/>
<dbReference type="PATRIC" id="fig|386585.9.peg.280"/>
<dbReference type="eggNOG" id="COG0575">
    <property type="taxonomic scope" value="Bacteria"/>
</dbReference>
<dbReference type="HOGENOM" id="CLU_037294_1_2_6"/>
<dbReference type="OMA" id="YVFILVW"/>
<dbReference type="UniPathway" id="UPA00557">
    <property type="reaction ID" value="UER00614"/>
</dbReference>
<dbReference type="Proteomes" id="UP000000558">
    <property type="component" value="Chromosome"/>
</dbReference>
<dbReference type="Proteomes" id="UP000002519">
    <property type="component" value="Chromosome"/>
</dbReference>
<dbReference type="GO" id="GO:0005886">
    <property type="term" value="C:plasma membrane"/>
    <property type="evidence" value="ECO:0007669"/>
    <property type="project" value="UniProtKB-SubCell"/>
</dbReference>
<dbReference type="GO" id="GO:0004605">
    <property type="term" value="F:phosphatidate cytidylyltransferase activity"/>
    <property type="evidence" value="ECO:0007669"/>
    <property type="project" value="UniProtKB-EC"/>
</dbReference>
<dbReference type="GO" id="GO:0016024">
    <property type="term" value="P:CDP-diacylglycerol biosynthetic process"/>
    <property type="evidence" value="ECO:0007669"/>
    <property type="project" value="UniProtKB-UniPathway"/>
</dbReference>
<dbReference type="InterPro" id="IPR000374">
    <property type="entry name" value="PC_trans"/>
</dbReference>
<dbReference type="NCBIfam" id="NF008635">
    <property type="entry name" value="PRK11624.1"/>
    <property type="match status" value="1"/>
</dbReference>
<dbReference type="PANTHER" id="PTHR46382">
    <property type="entry name" value="PHOSPHATIDATE CYTIDYLYLTRANSFERASE"/>
    <property type="match status" value="1"/>
</dbReference>
<dbReference type="PANTHER" id="PTHR46382:SF1">
    <property type="entry name" value="PHOSPHATIDATE CYTIDYLYLTRANSFERASE"/>
    <property type="match status" value="1"/>
</dbReference>
<dbReference type="Pfam" id="PF01148">
    <property type="entry name" value="CTP_transf_1"/>
    <property type="match status" value="1"/>
</dbReference>
<dbReference type="PROSITE" id="PS01315">
    <property type="entry name" value="CDS"/>
    <property type="match status" value="1"/>
</dbReference>
<protein>
    <recommendedName>
        <fullName>Phosphatidate cytidylyltransferase</fullName>
        <ecNumber>2.7.7.41</ecNumber>
    </recommendedName>
    <alternativeName>
        <fullName>CDP-DAG synthase</fullName>
    </alternativeName>
    <alternativeName>
        <fullName>CDP-DG synthase</fullName>
    </alternativeName>
    <alternativeName>
        <fullName>CDP-diacylglycerol synthase</fullName>
        <shortName>CDS</shortName>
    </alternativeName>
    <alternativeName>
        <fullName>CDP-diglyceride pyrophosphorylase</fullName>
    </alternativeName>
    <alternativeName>
        <fullName>CDP-diglyceride synthase</fullName>
    </alternativeName>
    <alternativeName>
        <fullName>CTP:phosphatidate cytidylyltransferase</fullName>
    </alternativeName>
</protein>
<reference key="1">
    <citation type="journal article" date="2001" name="Nature">
        <title>Genome sequence of enterohaemorrhagic Escherichia coli O157:H7.</title>
        <authorList>
            <person name="Perna N.T."/>
            <person name="Plunkett G. III"/>
            <person name="Burland V."/>
            <person name="Mau B."/>
            <person name="Glasner J.D."/>
            <person name="Rose D.J."/>
            <person name="Mayhew G.F."/>
            <person name="Evans P.S."/>
            <person name="Gregor J."/>
            <person name="Kirkpatrick H.A."/>
            <person name="Posfai G."/>
            <person name="Hackett J."/>
            <person name="Klink S."/>
            <person name="Boutin A."/>
            <person name="Shao Y."/>
            <person name="Miller L."/>
            <person name="Grotbeck E.J."/>
            <person name="Davis N.W."/>
            <person name="Lim A."/>
            <person name="Dimalanta E.T."/>
            <person name="Potamousis K."/>
            <person name="Apodaca J."/>
            <person name="Anantharaman T.S."/>
            <person name="Lin J."/>
            <person name="Yen G."/>
            <person name="Schwartz D.C."/>
            <person name="Welch R.A."/>
            <person name="Blattner F.R."/>
        </authorList>
    </citation>
    <scope>NUCLEOTIDE SEQUENCE [LARGE SCALE GENOMIC DNA]</scope>
    <source>
        <strain>O157:H7 / EDL933 / ATCC 700927 / EHEC</strain>
    </source>
</reference>
<reference key="2">
    <citation type="journal article" date="2001" name="DNA Res.">
        <title>Complete genome sequence of enterohemorrhagic Escherichia coli O157:H7 and genomic comparison with a laboratory strain K-12.</title>
        <authorList>
            <person name="Hayashi T."/>
            <person name="Makino K."/>
            <person name="Ohnishi M."/>
            <person name="Kurokawa K."/>
            <person name="Ishii K."/>
            <person name="Yokoyama K."/>
            <person name="Han C.-G."/>
            <person name="Ohtsubo E."/>
            <person name="Nakayama K."/>
            <person name="Murata T."/>
            <person name="Tanaka M."/>
            <person name="Tobe T."/>
            <person name="Iida T."/>
            <person name="Takami H."/>
            <person name="Honda T."/>
            <person name="Sasakawa C."/>
            <person name="Ogasawara N."/>
            <person name="Yasunaga T."/>
            <person name="Kuhara S."/>
            <person name="Shiba T."/>
            <person name="Hattori M."/>
            <person name="Shinagawa H."/>
        </authorList>
    </citation>
    <scope>NUCLEOTIDE SEQUENCE [LARGE SCALE GENOMIC DNA]</scope>
    <source>
        <strain>O157:H7 / Sakai / RIMD 0509952 / EHEC</strain>
    </source>
</reference>
<name>CDSA_ECO57</name>
<keyword id="KW-0997">Cell inner membrane</keyword>
<keyword id="KW-1003">Cell membrane</keyword>
<keyword id="KW-0444">Lipid biosynthesis</keyword>
<keyword id="KW-0443">Lipid metabolism</keyword>
<keyword id="KW-0472">Membrane</keyword>
<keyword id="KW-0548">Nucleotidyltransferase</keyword>
<keyword id="KW-0594">Phospholipid biosynthesis</keyword>
<keyword id="KW-1208">Phospholipid metabolism</keyword>
<keyword id="KW-1185">Reference proteome</keyword>
<keyword id="KW-0808">Transferase</keyword>
<keyword id="KW-0812">Transmembrane</keyword>
<keyword id="KW-1133">Transmembrane helix</keyword>
<comment type="catalytic activity">
    <reaction>
        <text>a 1,2-diacyl-sn-glycero-3-phosphate + CTP + H(+) = a CDP-1,2-diacyl-sn-glycerol + diphosphate</text>
        <dbReference type="Rhea" id="RHEA:16229"/>
        <dbReference type="ChEBI" id="CHEBI:15378"/>
        <dbReference type="ChEBI" id="CHEBI:33019"/>
        <dbReference type="ChEBI" id="CHEBI:37563"/>
        <dbReference type="ChEBI" id="CHEBI:58332"/>
        <dbReference type="ChEBI" id="CHEBI:58608"/>
        <dbReference type="EC" id="2.7.7.41"/>
    </reaction>
</comment>
<comment type="pathway">
    <text>Phospholipid metabolism; CDP-diacylglycerol biosynthesis; CDP-diacylglycerol from sn-glycerol 3-phosphate: step 3/3.</text>
</comment>
<comment type="subcellular location">
    <subcellularLocation>
        <location evidence="1">Cell inner membrane</location>
        <topology evidence="1">Multi-pass membrane protein</topology>
    </subcellularLocation>
</comment>
<comment type="similarity">
    <text evidence="3">Belongs to the CDS family.</text>
</comment>
<comment type="sequence caution" evidence="3">
    <conflict type="erroneous initiation">
        <sequence resource="EMBL-CDS" id="AAG54477"/>
    </conflict>
</comment>
<comment type="sequence caution" evidence="3">
    <conflict type="erroneous initiation">
        <sequence resource="EMBL-CDS" id="BAB33600"/>
    </conflict>
</comment>
<gene>
    <name type="primary">cdsA</name>
    <name type="ordered locus">Z0186</name>
    <name type="ordered locus">ECs0177</name>
</gene>
<evidence type="ECO:0000250" key="1"/>
<evidence type="ECO:0000255" key="2"/>
<evidence type="ECO:0000305" key="3"/>
<sequence length="285" mass="31454">MLKYRLISAFVLIPVVIAALFLLPPVGFAIVTLVVCMLAAWEWGQLSGFTTRSQRVWLAVLCGLLLALMLFLLPEYHRNIHQPLVEISLWASLGWWIVALLLVLFYPGSAAIWRNSKTLRLIFGVLTIVPFFWGMLALRAWHYDENHYSGAIWLLYVMILVWGADSGAYMFGKLFGKHKLAPKVSPGKTWQGFIGGLATAAVISWGYGMWANLDVAPVTLLICSIVAALASVLGDLTESMFKREAGIKDSGHLIPGHGGILDRIDSLTAAVPVFACLLLLVFRTL</sequence>
<proteinExistence type="inferred from homology"/>